<dbReference type="EMBL" id="X55453">
    <property type="protein sequence ID" value="CAA39097.1"/>
    <property type="molecule type" value="Genomic_DNA"/>
</dbReference>
<dbReference type="EMBL" id="X55453">
    <property type="protein sequence ID" value="CAA39098.1"/>
    <property type="status" value="ALT_INIT"/>
    <property type="molecule type" value="Genomic_DNA"/>
</dbReference>
<dbReference type="EMBL" id="AJ277756">
    <property type="protein sequence ID" value="CAC33484.1"/>
    <property type="molecule type" value="Genomic_DNA"/>
</dbReference>
<dbReference type="PIR" id="A60989">
    <property type="entry name" value="A60989"/>
</dbReference>
<dbReference type="RefSeq" id="WP_010947527.1">
    <property type="nucleotide sequence ID" value="NZ_UGOV01000002.1"/>
</dbReference>
<dbReference type="SMR" id="Q05358"/>
<dbReference type="STRING" id="91892.BIZ52_08625"/>
<dbReference type="GeneID" id="57035793"/>
<dbReference type="eggNOG" id="COG0468">
    <property type="taxonomic scope" value="Bacteria"/>
</dbReference>
<dbReference type="OrthoDB" id="9776733at2"/>
<dbReference type="GO" id="GO:0005829">
    <property type="term" value="C:cytosol"/>
    <property type="evidence" value="ECO:0007669"/>
    <property type="project" value="TreeGrafter"/>
</dbReference>
<dbReference type="GO" id="GO:0005524">
    <property type="term" value="F:ATP binding"/>
    <property type="evidence" value="ECO:0007669"/>
    <property type="project" value="UniProtKB-UniRule"/>
</dbReference>
<dbReference type="GO" id="GO:0016887">
    <property type="term" value="F:ATP hydrolysis activity"/>
    <property type="evidence" value="ECO:0007669"/>
    <property type="project" value="InterPro"/>
</dbReference>
<dbReference type="GO" id="GO:0140664">
    <property type="term" value="F:ATP-dependent DNA damage sensor activity"/>
    <property type="evidence" value="ECO:0007669"/>
    <property type="project" value="InterPro"/>
</dbReference>
<dbReference type="GO" id="GO:0003684">
    <property type="term" value="F:damaged DNA binding"/>
    <property type="evidence" value="ECO:0007669"/>
    <property type="project" value="UniProtKB-UniRule"/>
</dbReference>
<dbReference type="GO" id="GO:0003697">
    <property type="term" value="F:single-stranded DNA binding"/>
    <property type="evidence" value="ECO:0007669"/>
    <property type="project" value="UniProtKB-UniRule"/>
</dbReference>
<dbReference type="GO" id="GO:0006310">
    <property type="term" value="P:DNA recombination"/>
    <property type="evidence" value="ECO:0007669"/>
    <property type="project" value="UniProtKB-UniRule"/>
</dbReference>
<dbReference type="GO" id="GO:0006281">
    <property type="term" value="P:DNA repair"/>
    <property type="evidence" value="ECO:0007669"/>
    <property type="project" value="UniProtKB-UniRule"/>
</dbReference>
<dbReference type="GO" id="GO:0009432">
    <property type="term" value="P:SOS response"/>
    <property type="evidence" value="ECO:0007669"/>
    <property type="project" value="UniProtKB-UniRule"/>
</dbReference>
<dbReference type="CDD" id="cd00983">
    <property type="entry name" value="RecA"/>
    <property type="match status" value="1"/>
</dbReference>
<dbReference type="FunFam" id="3.40.50.300:FF:000087">
    <property type="entry name" value="Recombinase RecA"/>
    <property type="match status" value="1"/>
</dbReference>
<dbReference type="Gene3D" id="3.40.50.300">
    <property type="entry name" value="P-loop containing nucleotide triphosphate hydrolases"/>
    <property type="match status" value="1"/>
</dbReference>
<dbReference type="HAMAP" id="MF_00268">
    <property type="entry name" value="RecA"/>
    <property type="match status" value="1"/>
</dbReference>
<dbReference type="InterPro" id="IPR003593">
    <property type="entry name" value="AAA+_ATPase"/>
</dbReference>
<dbReference type="InterPro" id="IPR013765">
    <property type="entry name" value="DNA_recomb/repair_RecA"/>
</dbReference>
<dbReference type="InterPro" id="IPR020584">
    <property type="entry name" value="DNA_recomb/repair_RecA_CS"/>
</dbReference>
<dbReference type="InterPro" id="IPR027417">
    <property type="entry name" value="P-loop_NTPase"/>
</dbReference>
<dbReference type="InterPro" id="IPR049261">
    <property type="entry name" value="RecA-like_C"/>
</dbReference>
<dbReference type="InterPro" id="IPR049428">
    <property type="entry name" value="RecA-like_N"/>
</dbReference>
<dbReference type="InterPro" id="IPR020588">
    <property type="entry name" value="RecA_ATP-bd"/>
</dbReference>
<dbReference type="InterPro" id="IPR023400">
    <property type="entry name" value="RecA_C_sf"/>
</dbReference>
<dbReference type="InterPro" id="IPR020587">
    <property type="entry name" value="RecA_monomer-monomer_interface"/>
</dbReference>
<dbReference type="NCBIfam" id="TIGR02012">
    <property type="entry name" value="tigrfam_recA"/>
    <property type="match status" value="1"/>
</dbReference>
<dbReference type="PANTHER" id="PTHR45900:SF1">
    <property type="entry name" value="MITOCHONDRIAL DNA REPAIR PROTEIN RECA HOMOLOG-RELATED"/>
    <property type="match status" value="1"/>
</dbReference>
<dbReference type="PANTHER" id="PTHR45900">
    <property type="entry name" value="RECA"/>
    <property type="match status" value="1"/>
</dbReference>
<dbReference type="Pfam" id="PF00154">
    <property type="entry name" value="RecA"/>
    <property type="match status" value="1"/>
</dbReference>
<dbReference type="Pfam" id="PF21096">
    <property type="entry name" value="RecA_C"/>
    <property type="match status" value="1"/>
</dbReference>
<dbReference type="PRINTS" id="PR00142">
    <property type="entry name" value="RECA"/>
</dbReference>
<dbReference type="SMART" id="SM00382">
    <property type="entry name" value="AAA"/>
    <property type="match status" value="1"/>
</dbReference>
<dbReference type="SUPFAM" id="SSF52540">
    <property type="entry name" value="P-loop containing nucleoside triphosphate hydrolases"/>
    <property type="match status" value="1"/>
</dbReference>
<dbReference type="SUPFAM" id="SSF54752">
    <property type="entry name" value="RecA protein, C-terminal domain"/>
    <property type="match status" value="1"/>
</dbReference>
<dbReference type="PROSITE" id="PS00321">
    <property type="entry name" value="RECA_1"/>
    <property type="match status" value="1"/>
</dbReference>
<dbReference type="PROSITE" id="PS50162">
    <property type="entry name" value="RECA_2"/>
    <property type="match status" value="1"/>
</dbReference>
<dbReference type="PROSITE" id="PS50163">
    <property type="entry name" value="RECA_3"/>
    <property type="match status" value="1"/>
</dbReference>
<comment type="function">
    <text evidence="1">Can catalyze the hydrolysis of ATP in the presence of single-stranded DNA, the ATP-dependent uptake of single-stranded DNA by duplex DNA, and the ATP-dependent hybridization of homologous single-stranded DNAs. It interacts with LexA causing its activation and leading to its autocatalytic cleavage.</text>
</comment>
<comment type="subcellular location">
    <subcellularLocation>
        <location evidence="1">Cytoplasm</location>
    </subcellularLocation>
</comment>
<comment type="similarity">
    <text evidence="1">Belongs to the RecA family.</text>
</comment>
<comment type="sequence caution" evidence="2">
    <conflict type="erroneous initiation">
        <sequence resource="EMBL-CDS" id="CAA39098"/>
    </conflict>
</comment>
<name>RECA_LEGPN</name>
<evidence type="ECO:0000255" key="1">
    <source>
        <dbReference type="HAMAP-Rule" id="MF_00268"/>
    </source>
</evidence>
<evidence type="ECO:0000305" key="2"/>
<reference key="1">
    <citation type="journal article" date="1990" name="FEMS Microbiol. Lett.">
        <title>Expression and nucleotide sequence analysis of the Legionella pneumophila recA gene.</title>
        <authorList>
            <person name="Zhao X."/>
            <person name="Dreyfus L.A."/>
        </authorList>
    </citation>
    <scope>NUCLEOTIDE SEQUENCE [GENOMIC DNA]</scope>
</reference>
<reference key="2">
    <citation type="journal article" date="2001" name="Mol. Microbiol.">
        <title>Chromosomal insertion and excision of a 30 kb unstable genetic element is responsible for phase variation of lipopolysaccharide and other virulence determinants in Legionella pneumophila.</title>
        <authorList>
            <person name="Lueneberg E."/>
            <person name="Mayer B."/>
            <person name="Daryab N."/>
            <person name="Kooistra O."/>
            <person name="Zaehringer U."/>
            <person name="Rohde M."/>
            <person name="Swanson J."/>
            <person name="Frosch M."/>
        </authorList>
    </citation>
    <scope>NUCLEOTIDE SEQUENCE [GENOMIC DNA]</scope>
    <source>
        <strain>ATCC 43109 / NCTC 12008 / RC1 / Olda / Serogroup 1</strain>
    </source>
</reference>
<keyword id="KW-0067">ATP-binding</keyword>
<keyword id="KW-0963">Cytoplasm</keyword>
<keyword id="KW-0227">DNA damage</keyword>
<keyword id="KW-0233">DNA recombination</keyword>
<keyword id="KW-0234">DNA repair</keyword>
<keyword id="KW-0238">DNA-binding</keyword>
<keyword id="KW-0547">Nucleotide-binding</keyword>
<keyword id="KW-0742">SOS response</keyword>
<gene>
    <name evidence="1" type="primary">recA</name>
</gene>
<protein>
    <recommendedName>
        <fullName evidence="1">Protein RecA</fullName>
    </recommendedName>
    <alternativeName>
        <fullName evidence="1">Recombinase A</fullName>
    </alternativeName>
</protein>
<sequence length="348" mass="37935">MEENKQKALSAAVSQIERQFGKGSVMRMGDSTVSRDIEAISTGSLGLDIALGIGGLPKGRIVEIYGPESSGKTTLTLQVIAECQKMGGTAAFIDAEHALDPSYAQKLGVKVDELLVSQPDTGEQALEITDMLVRSAAVDVVIIDSVAALTPKAEIEGEMGDSHVGLQARLMSQALRKLTANIKRSNTLVIFINQIRMKIGVMFGSPETTTGGNALKFYASVRLDIRRIGSIKKGEEILGSETRVKVVKNKVAPPFKMTEFDILYNEGISRESEIINLGVQLNLIEKSGAWYSYKQEKIGQGKENVRLYLKENPQVAAELEQQIRTELLEKKLSVLASSSEDLFETIDD</sequence>
<proteinExistence type="inferred from homology"/>
<organism>
    <name type="scientific">Legionella pneumophila</name>
    <dbReference type="NCBI Taxonomy" id="446"/>
    <lineage>
        <taxon>Bacteria</taxon>
        <taxon>Pseudomonadati</taxon>
        <taxon>Pseudomonadota</taxon>
        <taxon>Gammaproteobacteria</taxon>
        <taxon>Legionellales</taxon>
        <taxon>Legionellaceae</taxon>
        <taxon>Legionella</taxon>
    </lineage>
</organism>
<accession>Q05358</accession>
<accession>Q9AKW1</accession>
<feature type="chain" id="PRO_0000122740" description="Protein RecA">
    <location>
        <begin position="1"/>
        <end position="348"/>
    </location>
</feature>
<feature type="binding site" evidence="1">
    <location>
        <begin position="66"/>
        <end position="73"/>
    </location>
    <ligand>
        <name>ATP</name>
        <dbReference type="ChEBI" id="CHEBI:30616"/>
    </ligand>
</feature>
<feature type="sequence conflict" description="In Ref. 2; CAC33484." evidence="2" ref="2">
    <original>V</original>
    <variation>L</variation>
    <location>
        <position position="13"/>
    </location>
</feature>